<keyword id="KW-0349">Heme</keyword>
<keyword id="KW-0408">Iron</keyword>
<keyword id="KW-0449">Lipoprotein</keyword>
<keyword id="KW-0456">Lyase</keyword>
<keyword id="KW-0472">Membrane</keyword>
<keyword id="KW-0479">Metal-binding</keyword>
<keyword id="KW-0496">Mitochondrion</keyword>
<keyword id="KW-0999">Mitochondrion inner membrane</keyword>
<keyword id="KW-0519">Myristate</keyword>
<keyword id="KW-1185">Reference proteome</keyword>
<keyword id="KW-0677">Repeat</keyword>
<dbReference type="EC" id="4.4.1.17" evidence="1"/>
<dbReference type="EMBL" id="BC142105">
    <property type="protein sequence ID" value="AAI42106.1"/>
    <property type="molecule type" value="mRNA"/>
</dbReference>
<dbReference type="RefSeq" id="NP_001092356.1">
    <property type="nucleotide sequence ID" value="NM_001098886.1"/>
</dbReference>
<dbReference type="FunCoup" id="A5PJG7">
    <property type="interactions" value="2272"/>
</dbReference>
<dbReference type="STRING" id="9913.ENSBTAP00000072945"/>
<dbReference type="PaxDb" id="9913-ENSBTAP00000016072"/>
<dbReference type="Ensembl" id="ENSBTAT00000016072.6">
    <property type="protein sequence ID" value="ENSBTAP00000016072.4"/>
    <property type="gene ID" value="ENSBTAG00000012113.6"/>
</dbReference>
<dbReference type="GeneID" id="506250"/>
<dbReference type="KEGG" id="bta:506250"/>
<dbReference type="CTD" id="3052"/>
<dbReference type="VEuPathDB" id="HostDB:ENSBTAG00000012113"/>
<dbReference type="VGNC" id="VGNC:29770">
    <property type="gene designation" value="HCCS"/>
</dbReference>
<dbReference type="eggNOG" id="KOG3996">
    <property type="taxonomic scope" value="Eukaryota"/>
</dbReference>
<dbReference type="GeneTree" id="ENSGT00390000004175"/>
<dbReference type="HOGENOM" id="CLU_048602_2_1_1"/>
<dbReference type="InParanoid" id="A5PJG7"/>
<dbReference type="OMA" id="KARFWLF"/>
<dbReference type="OrthoDB" id="4243at2759"/>
<dbReference type="TreeFam" id="TF105185"/>
<dbReference type="Reactome" id="R-BTA-611105">
    <property type="pathway name" value="Respiratory electron transport"/>
</dbReference>
<dbReference type="Proteomes" id="UP000009136">
    <property type="component" value="Unassembled WGS sequence"/>
</dbReference>
<dbReference type="Bgee" id="ENSBTAG00000012113">
    <property type="expression patterns" value="Expressed in tongue muscle and 104 other cell types or tissues"/>
</dbReference>
<dbReference type="GO" id="GO:0005743">
    <property type="term" value="C:mitochondrial inner membrane"/>
    <property type="evidence" value="ECO:0007669"/>
    <property type="project" value="UniProtKB-SubCell"/>
</dbReference>
<dbReference type="GO" id="GO:0005739">
    <property type="term" value="C:mitochondrion"/>
    <property type="evidence" value="ECO:0000318"/>
    <property type="project" value="GO_Central"/>
</dbReference>
<dbReference type="GO" id="GO:0004408">
    <property type="term" value="F:holocytochrome-c synthase activity"/>
    <property type="evidence" value="ECO:0000318"/>
    <property type="project" value="GO_Central"/>
</dbReference>
<dbReference type="GO" id="GO:0046872">
    <property type="term" value="F:metal ion binding"/>
    <property type="evidence" value="ECO:0007669"/>
    <property type="project" value="UniProtKB-KW"/>
</dbReference>
<dbReference type="InterPro" id="IPR000511">
    <property type="entry name" value="Holocyt_c/c1_synthase"/>
</dbReference>
<dbReference type="PANTHER" id="PTHR12743">
    <property type="entry name" value="CYTOCHROME C1 HEME LYASE"/>
    <property type="match status" value="1"/>
</dbReference>
<dbReference type="PANTHER" id="PTHR12743:SF0">
    <property type="entry name" value="HOLOCYTOCHROME C-TYPE SYNTHASE"/>
    <property type="match status" value="1"/>
</dbReference>
<dbReference type="Pfam" id="PF01265">
    <property type="entry name" value="Cyto_heme_lyase"/>
    <property type="match status" value="1"/>
</dbReference>
<dbReference type="PROSITE" id="PS00821">
    <property type="entry name" value="CYTO_HEME_LYASE_1"/>
    <property type="match status" value="1"/>
</dbReference>
<dbReference type="PROSITE" id="PS00822">
    <property type="entry name" value="CYTO_HEME_LYASE_2"/>
    <property type="match status" value="1"/>
</dbReference>
<comment type="function">
    <text evidence="1">Lyase that catalyzes the covalent linking of the heme group to the cytochrome C apoprotein to produce the mature functional cytochrome.</text>
</comment>
<comment type="catalytic activity">
    <reaction evidence="1">
        <text>holo-[cytochrome c] = apo-[cytochrome c] + heme b</text>
        <dbReference type="Rhea" id="RHEA:22648"/>
        <dbReference type="Rhea" id="RHEA-COMP:10725"/>
        <dbReference type="Rhea" id="RHEA-COMP:10726"/>
        <dbReference type="ChEBI" id="CHEBI:29950"/>
        <dbReference type="ChEBI" id="CHEBI:60344"/>
        <dbReference type="ChEBI" id="CHEBI:83739"/>
        <dbReference type="EC" id="4.4.1.17"/>
    </reaction>
    <physiologicalReaction direction="right-to-left" evidence="1">
        <dbReference type="Rhea" id="RHEA:22650"/>
    </physiologicalReaction>
</comment>
<comment type="subcellular location">
    <subcellularLocation>
        <location evidence="1">Mitochondrion inner membrane</location>
    </subcellularLocation>
    <subcellularLocation>
        <location evidence="1">Membrane</location>
        <topology evidence="1">Lipid-anchor</topology>
    </subcellularLocation>
</comment>
<comment type="similarity">
    <text evidence="3">Belongs to the cytochrome c-type heme lyase family.</text>
</comment>
<reference key="1">
    <citation type="submission" date="2007-06" db="EMBL/GenBank/DDBJ databases">
        <authorList>
            <consortium name="NIH - Mammalian Gene Collection (MGC) project"/>
        </authorList>
    </citation>
    <scope>NUCLEOTIDE SEQUENCE [LARGE SCALE MRNA]</scope>
    <source>
        <strain>Hereford</strain>
        <tissue>Thymus</tissue>
    </source>
</reference>
<protein>
    <recommendedName>
        <fullName evidence="1">Holocytochrome c-type synthase</fullName>
        <ecNumber evidence="1">4.4.1.17</ecNumber>
    </recommendedName>
    <alternativeName>
        <fullName evidence="1">Cytochrome c-type heme lyase</fullName>
        <shortName evidence="1">CCHL</shortName>
    </alternativeName>
</protein>
<name>CCHL_BOVIN</name>
<accession>A5PJG7</accession>
<sequence>MGLSASAPAASTVQTSTPAASDHQTAAPTSGCPMHEGKVKGCPVSAEPSDSTCGSKTNSVPAHQERAYEYVQCPITGAKAANKENLDPSNLMPPPNQTPAPDQPFPLSTVREESSIPRADSDKKWVYPSEQMFWNAMLRKGWKWKDEDISQKDMYNIIRIHNQNNEQAWKEILKWEALHAAECPCGPSLIRFGGKAKEYSPRARIRSWMGYELPFDRHDWIINRCGTEVRYVIDYYDGGEVNQDYQFTILDVRPALDSLSAVWDRMKVAWWRWTS</sequence>
<proteinExistence type="evidence at transcript level"/>
<organism>
    <name type="scientific">Bos taurus</name>
    <name type="common">Bovine</name>
    <dbReference type="NCBI Taxonomy" id="9913"/>
    <lineage>
        <taxon>Eukaryota</taxon>
        <taxon>Metazoa</taxon>
        <taxon>Chordata</taxon>
        <taxon>Craniata</taxon>
        <taxon>Vertebrata</taxon>
        <taxon>Euteleostomi</taxon>
        <taxon>Mammalia</taxon>
        <taxon>Eutheria</taxon>
        <taxon>Laurasiatheria</taxon>
        <taxon>Artiodactyla</taxon>
        <taxon>Ruminantia</taxon>
        <taxon>Pecora</taxon>
        <taxon>Bovidae</taxon>
        <taxon>Bovinae</taxon>
        <taxon>Bos</taxon>
    </lineage>
</organism>
<feature type="initiator methionine" description="Removed" evidence="1">
    <location>
        <position position="1"/>
    </location>
</feature>
<feature type="chain" id="PRO_0000331125" description="Holocytochrome c-type synthase">
    <location>
        <begin position="2"/>
        <end position="275"/>
    </location>
</feature>
<feature type="repeat" description="HRM 1">
    <location>
        <begin position="31"/>
        <end position="36"/>
    </location>
</feature>
<feature type="repeat" description="HRM 2">
    <location>
        <begin position="41"/>
        <end position="46"/>
    </location>
</feature>
<feature type="region of interest" description="Disordered" evidence="2">
    <location>
        <begin position="1"/>
        <end position="59"/>
    </location>
</feature>
<feature type="region of interest" description="Disordered" evidence="2">
    <location>
        <begin position="83"/>
        <end position="102"/>
    </location>
</feature>
<feature type="compositionally biased region" description="Polar residues" evidence="2">
    <location>
        <begin position="9"/>
        <end position="28"/>
    </location>
</feature>
<feature type="compositionally biased region" description="Polar residues" evidence="2">
    <location>
        <begin position="48"/>
        <end position="59"/>
    </location>
</feature>
<feature type="compositionally biased region" description="Pro residues" evidence="2">
    <location>
        <begin position="91"/>
        <end position="102"/>
    </location>
</feature>
<feature type="lipid moiety-binding region" description="N-myristoyl glycine" evidence="1">
    <location>
        <position position="2"/>
    </location>
</feature>
<gene>
    <name evidence="1" type="primary">HCCS</name>
</gene>
<evidence type="ECO:0000250" key="1">
    <source>
        <dbReference type="UniProtKB" id="P53701"/>
    </source>
</evidence>
<evidence type="ECO:0000256" key="2">
    <source>
        <dbReference type="SAM" id="MobiDB-lite"/>
    </source>
</evidence>
<evidence type="ECO:0000305" key="3"/>